<sequence length="178" mass="19248">MSRIGNKVITLPAGVELAQNNGVVTVKGPKGELTREFPTAIEIRVEGAEVTLHRPNDSKEMKTIHGTSRANLNNMVVGVSEGFKKELEMRGVGYRAQLAGNKLTLAVGKSHPDEVVAPEGITFEVPTPTQIVVSGINKEVVGQTAAYIRSLRAPEPYKGKGIRYVGEFVRRKEGKTGK</sequence>
<organism>
    <name type="scientific">Streptococcus suis (strain 05ZYH33)</name>
    <dbReference type="NCBI Taxonomy" id="391295"/>
    <lineage>
        <taxon>Bacteria</taxon>
        <taxon>Bacillati</taxon>
        <taxon>Bacillota</taxon>
        <taxon>Bacilli</taxon>
        <taxon>Lactobacillales</taxon>
        <taxon>Streptococcaceae</taxon>
        <taxon>Streptococcus</taxon>
    </lineage>
</organism>
<reference key="1">
    <citation type="journal article" date="2007" name="PLoS ONE">
        <title>A glimpse of streptococcal toxic shock syndrome from comparative genomics of S. suis 2 Chinese isolates.</title>
        <authorList>
            <person name="Chen C."/>
            <person name="Tang J."/>
            <person name="Dong W."/>
            <person name="Wang C."/>
            <person name="Feng Y."/>
            <person name="Wang J."/>
            <person name="Zheng F."/>
            <person name="Pan X."/>
            <person name="Liu D."/>
            <person name="Li M."/>
            <person name="Song Y."/>
            <person name="Zhu X."/>
            <person name="Sun H."/>
            <person name="Feng T."/>
            <person name="Guo Z."/>
            <person name="Ju A."/>
            <person name="Ge J."/>
            <person name="Dong Y."/>
            <person name="Sun W."/>
            <person name="Jiang Y."/>
            <person name="Wang J."/>
            <person name="Yan J."/>
            <person name="Yang H."/>
            <person name="Wang X."/>
            <person name="Gao G.F."/>
            <person name="Yang R."/>
            <person name="Wang J."/>
            <person name="Yu J."/>
        </authorList>
    </citation>
    <scope>NUCLEOTIDE SEQUENCE [LARGE SCALE GENOMIC DNA]</scope>
    <source>
        <strain>05ZYH33</strain>
    </source>
</reference>
<name>RL6_STRSY</name>
<dbReference type="EMBL" id="CP000407">
    <property type="protein sequence ID" value="ABP89057.1"/>
    <property type="molecule type" value="Genomic_DNA"/>
</dbReference>
<dbReference type="SMR" id="A4VSG8"/>
<dbReference type="STRING" id="391295.SSU05_0085"/>
<dbReference type="KEGG" id="ssu:SSU05_0085"/>
<dbReference type="eggNOG" id="COG0097">
    <property type="taxonomic scope" value="Bacteria"/>
</dbReference>
<dbReference type="HOGENOM" id="CLU_065464_1_2_9"/>
<dbReference type="GO" id="GO:0022625">
    <property type="term" value="C:cytosolic large ribosomal subunit"/>
    <property type="evidence" value="ECO:0007669"/>
    <property type="project" value="TreeGrafter"/>
</dbReference>
<dbReference type="GO" id="GO:0019843">
    <property type="term" value="F:rRNA binding"/>
    <property type="evidence" value="ECO:0007669"/>
    <property type="project" value="UniProtKB-UniRule"/>
</dbReference>
<dbReference type="GO" id="GO:0003735">
    <property type="term" value="F:structural constituent of ribosome"/>
    <property type="evidence" value="ECO:0007669"/>
    <property type="project" value="InterPro"/>
</dbReference>
<dbReference type="GO" id="GO:0002181">
    <property type="term" value="P:cytoplasmic translation"/>
    <property type="evidence" value="ECO:0007669"/>
    <property type="project" value="TreeGrafter"/>
</dbReference>
<dbReference type="FunFam" id="3.90.930.12:FF:000001">
    <property type="entry name" value="50S ribosomal protein L6"/>
    <property type="match status" value="1"/>
</dbReference>
<dbReference type="FunFam" id="3.90.930.12:FF:000002">
    <property type="entry name" value="50S ribosomal protein L6"/>
    <property type="match status" value="1"/>
</dbReference>
<dbReference type="Gene3D" id="3.90.930.12">
    <property type="entry name" value="Ribosomal protein L6, alpha-beta domain"/>
    <property type="match status" value="2"/>
</dbReference>
<dbReference type="HAMAP" id="MF_01365_B">
    <property type="entry name" value="Ribosomal_uL6_B"/>
    <property type="match status" value="1"/>
</dbReference>
<dbReference type="InterPro" id="IPR000702">
    <property type="entry name" value="Ribosomal_uL6-like"/>
</dbReference>
<dbReference type="InterPro" id="IPR036789">
    <property type="entry name" value="Ribosomal_uL6-like_a/b-dom_sf"/>
</dbReference>
<dbReference type="InterPro" id="IPR020040">
    <property type="entry name" value="Ribosomal_uL6_a/b-dom"/>
</dbReference>
<dbReference type="InterPro" id="IPR019906">
    <property type="entry name" value="Ribosomal_uL6_bac-type"/>
</dbReference>
<dbReference type="InterPro" id="IPR002358">
    <property type="entry name" value="Ribosomal_uL6_CS"/>
</dbReference>
<dbReference type="NCBIfam" id="TIGR03654">
    <property type="entry name" value="L6_bact"/>
    <property type="match status" value="1"/>
</dbReference>
<dbReference type="PANTHER" id="PTHR11655">
    <property type="entry name" value="60S/50S RIBOSOMAL PROTEIN L6/L9"/>
    <property type="match status" value="1"/>
</dbReference>
<dbReference type="PANTHER" id="PTHR11655:SF14">
    <property type="entry name" value="LARGE RIBOSOMAL SUBUNIT PROTEIN UL6M"/>
    <property type="match status" value="1"/>
</dbReference>
<dbReference type="Pfam" id="PF00347">
    <property type="entry name" value="Ribosomal_L6"/>
    <property type="match status" value="2"/>
</dbReference>
<dbReference type="PIRSF" id="PIRSF002162">
    <property type="entry name" value="Ribosomal_L6"/>
    <property type="match status" value="1"/>
</dbReference>
<dbReference type="PRINTS" id="PR00059">
    <property type="entry name" value="RIBOSOMALL6"/>
</dbReference>
<dbReference type="SUPFAM" id="SSF56053">
    <property type="entry name" value="Ribosomal protein L6"/>
    <property type="match status" value="2"/>
</dbReference>
<dbReference type="PROSITE" id="PS00525">
    <property type="entry name" value="RIBOSOMAL_L6_1"/>
    <property type="match status" value="1"/>
</dbReference>
<comment type="function">
    <text evidence="1">This protein binds to the 23S rRNA, and is important in its secondary structure. It is located near the subunit interface in the base of the L7/L12 stalk, and near the tRNA binding site of the peptidyltransferase center.</text>
</comment>
<comment type="subunit">
    <text evidence="1">Part of the 50S ribosomal subunit.</text>
</comment>
<comment type="similarity">
    <text evidence="1">Belongs to the universal ribosomal protein uL6 family.</text>
</comment>
<accession>A4VSG8</accession>
<feature type="chain" id="PRO_1000055319" description="Large ribosomal subunit protein uL6">
    <location>
        <begin position="1"/>
        <end position="178"/>
    </location>
</feature>
<keyword id="KW-0687">Ribonucleoprotein</keyword>
<keyword id="KW-0689">Ribosomal protein</keyword>
<keyword id="KW-0694">RNA-binding</keyword>
<keyword id="KW-0699">rRNA-binding</keyword>
<gene>
    <name evidence="1" type="primary">rplF</name>
    <name type="ordered locus">SSU05_0085</name>
</gene>
<protein>
    <recommendedName>
        <fullName evidence="1">Large ribosomal subunit protein uL6</fullName>
    </recommendedName>
    <alternativeName>
        <fullName evidence="2">50S ribosomal protein L6</fullName>
    </alternativeName>
</protein>
<proteinExistence type="inferred from homology"/>
<evidence type="ECO:0000255" key="1">
    <source>
        <dbReference type="HAMAP-Rule" id="MF_01365"/>
    </source>
</evidence>
<evidence type="ECO:0000305" key="2"/>